<sequence length="150" mass="17074">MQIFVKTLTGKTITLEVESSDTIDNVKSKIQDKEGIPPDQQRLIFAGKQLEDGRTLSDYNIQKESTLHLVLRLRGGGKKRKKKVYTTPKKIRHKHKKVKLAVLNYYKVDDEGKVAKLRKECPNCGPGIFLANHGDRFYCGKCHSTFATQK</sequence>
<protein>
    <recommendedName>
        <fullName evidence="3">Ubiquitin-ribosomal protein eS31 fusion protein</fullName>
    </recommendedName>
    <component>
        <recommendedName>
            <fullName>Ubiquitin</fullName>
        </recommendedName>
    </component>
    <component>
        <recommendedName>
            <fullName evidence="3">Small ribosomal subunit protein eS31</fullName>
        </recommendedName>
        <alternativeName>
            <fullName>40S ribosomal protein S27a</fullName>
        </alternativeName>
    </component>
</protein>
<comment type="function">
    <molecule>Ubiquitin</molecule>
    <text evidence="1">Exists either covalently attached to another protein, or free (unanchored). When covalently bound, it is conjugated to target proteins via an isopeptide bond either as a monomer (monoubiquitin), a polymer linked via different Lys residues of the ubiquitin (polyubiquitin chains) or a linear polymer linked via the initiator Met of the ubiquitin (linear polyubiquitin chains). Polyubiquitin chains, when attached to a target protein, have different functions depending on the Lys residue of the ubiquitin that is linked: Lys-6-linked may be involved in DNA repair; Lys-11-linked is involved in ERAD (endoplasmic reticulum-associated degradation) and in cell-cycle regulation; Lys-29-linked is involved in lysosomal degradation; Lys-33-linked is involved in kinase modification; Lys-48-linked is involved in protein degradation via the proteasome; Lys-63-linked is involved in endocytosis, and DNA-damage responses. Linear polymer chains formed via attachment by the initiator Met lead to cell signaling. Ubiquitin is usually conjugated to Lys residues of target proteins, however, in rare cases, conjugation to Cys or Ser residues has been observed. When polyubiquitin is free (unanchored-polyubiquitin), it also has distinct roles, such as in activation of protein kinases, and in signaling (By similarity).</text>
</comment>
<comment type="function">
    <molecule>Small ribosomal subunit protein eS31</molecule>
    <text>Component of the 40S subunit of the ribosome.</text>
</comment>
<comment type="subunit">
    <molecule>Small ribosomal subunit protein eS31</molecule>
    <text evidence="1">Part of the 40S ribosomal subunit.</text>
</comment>
<comment type="subcellular location">
    <molecule>Ubiquitin</molecule>
    <subcellularLocation>
        <location evidence="1">Cytoplasm</location>
    </subcellularLocation>
    <subcellularLocation>
        <location evidence="1">Nucleus</location>
    </subcellularLocation>
</comment>
<comment type="miscellaneous">
    <text>Ubiquitin is encoded by several different genes. Ubi3 genes code for a single copy of ubiquitin fused to the ribosomal protein eS31. Ubi4 is synthesized as a polyubiquitin precursor with 5 exact head to tail repeats.</text>
</comment>
<comment type="similarity">
    <text evidence="3">In the N-terminal section; belongs to the ubiquitin family.</text>
</comment>
<comment type="similarity">
    <text evidence="3">In the C-terminal section; belongs to the eukaryotic ribosomal protein eS31 family.</text>
</comment>
<keyword id="KW-0002">3D-structure</keyword>
<keyword id="KW-0963">Cytoplasm</keyword>
<keyword id="KW-1017">Isopeptide bond</keyword>
<keyword id="KW-0479">Metal-binding</keyword>
<keyword id="KW-0539">Nucleus</keyword>
<keyword id="KW-1185">Reference proteome</keyword>
<keyword id="KW-0687">Ribonucleoprotein</keyword>
<keyword id="KW-0689">Ribosomal protein</keyword>
<keyword id="KW-0832">Ubl conjugation</keyword>
<keyword id="KW-0862">Zinc</keyword>
<keyword id="KW-0863">Zinc-finger</keyword>
<dbReference type="EMBL" id="AJ243802">
    <property type="protein sequence ID" value="CAB50894.1"/>
    <property type="molecule type" value="Genomic_DNA"/>
</dbReference>
<dbReference type="EMBL" id="CR382124">
    <property type="protein sequence ID" value="CAH00967.1"/>
    <property type="molecule type" value="Genomic_DNA"/>
</dbReference>
<dbReference type="RefSeq" id="XP_453871.1">
    <property type="nucleotide sequence ID" value="XM_453871.1"/>
</dbReference>
<dbReference type="PDB" id="3J80">
    <property type="method" value="EM"/>
    <property type="resolution" value="3.75 A"/>
    <property type="chains" value="f=1-150"/>
</dbReference>
<dbReference type="PDB" id="3J81">
    <property type="method" value="EM"/>
    <property type="resolution" value="4.00 A"/>
    <property type="chains" value="f=1-150"/>
</dbReference>
<dbReference type="PDB" id="3JAM">
    <property type="method" value="EM"/>
    <property type="resolution" value="3.46 A"/>
    <property type="chains" value="f=1-150"/>
</dbReference>
<dbReference type="PDB" id="3JAP">
    <property type="method" value="EM"/>
    <property type="resolution" value="4.90 A"/>
    <property type="chains" value="f=1-150"/>
</dbReference>
<dbReference type="PDB" id="5IT7">
    <property type="method" value="EM"/>
    <property type="resolution" value="3.60 A"/>
    <property type="chains" value="f=82-150"/>
</dbReference>
<dbReference type="PDB" id="5IT9">
    <property type="method" value="EM"/>
    <property type="resolution" value="3.80 A"/>
    <property type="chains" value="f=82-150"/>
</dbReference>
<dbReference type="PDB" id="6FYX">
    <property type="method" value="EM"/>
    <property type="resolution" value="3.05 A"/>
    <property type="chains" value="f=1-150"/>
</dbReference>
<dbReference type="PDB" id="6FYY">
    <property type="method" value="EM"/>
    <property type="resolution" value="3.05 A"/>
    <property type="chains" value="f=1-150"/>
</dbReference>
<dbReference type="PDB" id="6GSM">
    <property type="method" value="EM"/>
    <property type="resolution" value="5.15 A"/>
    <property type="chains" value="f=82-150"/>
</dbReference>
<dbReference type="PDB" id="6GSN">
    <property type="method" value="EM"/>
    <property type="resolution" value="5.75 A"/>
    <property type="chains" value="f=82-150"/>
</dbReference>
<dbReference type="PDB" id="6UZ7">
    <property type="method" value="EM"/>
    <property type="resolution" value="3.60 A"/>
    <property type="chains" value="f=1-150"/>
</dbReference>
<dbReference type="PDB" id="8I7J">
    <property type="method" value="EM"/>
    <property type="resolution" value="4.60 A"/>
    <property type="chains" value="f=1-150"/>
</dbReference>
<dbReference type="PDB" id="8RW1">
    <property type="method" value="EM"/>
    <property type="resolution" value="3.35 A"/>
    <property type="chains" value="f=1-150"/>
</dbReference>
<dbReference type="PDB" id="8S8D">
    <property type="method" value="EM"/>
    <property type="resolution" value="3.45 A"/>
    <property type="chains" value="f=1-150"/>
</dbReference>
<dbReference type="PDB" id="8S8E">
    <property type="method" value="EM"/>
    <property type="resolution" value="3.85 A"/>
    <property type="chains" value="f=1-150"/>
</dbReference>
<dbReference type="PDB" id="8S8F">
    <property type="method" value="EM"/>
    <property type="resolution" value="3.95 A"/>
    <property type="chains" value="f=1-150"/>
</dbReference>
<dbReference type="PDB" id="8S8G">
    <property type="method" value="EM"/>
    <property type="resolution" value="4.00 A"/>
    <property type="chains" value="f=1-150"/>
</dbReference>
<dbReference type="PDB" id="8S8H">
    <property type="method" value="EM"/>
    <property type="resolution" value="4.00 A"/>
    <property type="chains" value="f=1-150"/>
</dbReference>
<dbReference type="PDB" id="8S8I">
    <property type="method" value="EM"/>
    <property type="resolution" value="4.30 A"/>
    <property type="chains" value="f=1-150"/>
</dbReference>
<dbReference type="PDB" id="8S8J">
    <property type="method" value="EM"/>
    <property type="resolution" value="4.70 A"/>
    <property type="chains" value="f=1-150"/>
</dbReference>
<dbReference type="PDB" id="8S8K">
    <property type="method" value="EM"/>
    <property type="resolution" value="4.00 A"/>
    <property type="chains" value="f=1-150"/>
</dbReference>
<dbReference type="PDBsum" id="3J80"/>
<dbReference type="PDBsum" id="3J81"/>
<dbReference type="PDBsum" id="3JAM"/>
<dbReference type="PDBsum" id="3JAP"/>
<dbReference type="PDBsum" id="5IT7"/>
<dbReference type="PDBsum" id="5IT9"/>
<dbReference type="PDBsum" id="6FYX"/>
<dbReference type="PDBsum" id="6FYY"/>
<dbReference type="PDBsum" id="6GSM"/>
<dbReference type="PDBsum" id="6GSN"/>
<dbReference type="PDBsum" id="6UZ7"/>
<dbReference type="PDBsum" id="8I7J"/>
<dbReference type="PDBsum" id="8RW1"/>
<dbReference type="PDBsum" id="8S8D"/>
<dbReference type="PDBsum" id="8S8E"/>
<dbReference type="PDBsum" id="8S8F"/>
<dbReference type="PDBsum" id="8S8G"/>
<dbReference type="PDBsum" id="8S8H"/>
<dbReference type="PDBsum" id="8S8I"/>
<dbReference type="PDBsum" id="8S8J"/>
<dbReference type="PDBsum" id="8S8K"/>
<dbReference type="EMDB" id="EMD-0057"/>
<dbReference type="EMDB" id="EMD-0058"/>
<dbReference type="EMDB" id="EMD-19541"/>
<dbReference type="EMDB" id="EMD-19801"/>
<dbReference type="EMDB" id="EMD-19802"/>
<dbReference type="EMDB" id="EMD-19803"/>
<dbReference type="EMDB" id="EMD-19804"/>
<dbReference type="EMDB" id="EMD-19805"/>
<dbReference type="EMDB" id="EMD-19806"/>
<dbReference type="EMDB" id="EMD-19807"/>
<dbReference type="EMDB" id="EMD-19808"/>
<dbReference type="EMDB" id="EMD-20952"/>
<dbReference type="EMDB" id="EMD-35216"/>
<dbReference type="EMDB" id="EMD-4327"/>
<dbReference type="EMDB" id="EMD-4328"/>
<dbReference type="EMDB" id="EMD-8123"/>
<dbReference type="EMDB" id="EMD-8124"/>
<dbReference type="SMR" id="P69061"/>
<dbReference type="FunCoup" id="P69061">
    <property type="interactions" value="1213"/>
</dbReference>
<dbReference type="STRING" id="284590.P69061"/>
<dbReference type="PaxDb" id="284590-P69061"/>
<dbReference type="KEGG" id="kla:KLLA0_D18304g"/>
<dbReference type="eggNOG" id="KOG0004">
    <property type="taxonomic scope" value="Eukaryota"/>
</dbReference>
<dbReference type="HOGENOM" id="CLU_010412_2_0_1"/>
<dbReference type="InParanoid" id="P69061"/>
<dbReference type="OMA" id="GVFMAFH"/>
<dbReference type="EvolutionaryTrace" id="P69061"/>
<dbReference type="Proteomes" id="UP000000598">
    <property type="component" value="Chromosome D"/>
</dbReference>
<dbReference type="GO" id="GO:0005737">
    <property type="term" value="C:cytoplasm"/>
    <property type="evidence" value="ECO:0007669"/>
    <property type="project" value="UniProtKB-SubCell"/>
</dbReference>
<dbReference type="GO" id="GO:0005634">
    <property type="term" value="C:nucleus"/>
    <property type="evidence" value="ECO:0007669"/>
    <property type="project" value="UniProtKB-SubCell"/>
</dbReference>
<dbReference type="GO" id="GO:1990904">
    <property type="term" value="C:ribonucleoprotein complex"/>
    <property type="evidence" value="ECO:0007669"/>
    <property type="project" value="UniProtKB-KW"/>
</dbReference>
<dbReference type="GO" id="GO:0005840">
    <property type="term" value="C:ribosome"/>
    <property type="evidence" value="ECO:0007669"/>
    <property type="project" value="UniProtKB-KW"/>
</dbReference>
<dbReference type="GO" id="GO:0003735">
    <property type="term" value="F:structural constituent of ribosome"/>
    <property type="evidence" value="ECO:0007669"/>
    <property type="project" value="InterPro"/>
</dbReference>
<dbReference type="GO" id="GO:0008270">
    <property type="term" value="F:zinc ion binding"/>
    <property type="evidence" value="ECO:0007669"/>
    <property type="project" value="UniProtKB-KW"/>
</dbReference>
<dbReference type="GO" id="GO:0006412">
    <property type="term" value="P:translation"/>
    <property type="evidence" value="ECO:0007669"/>
    <property type="project" value="InterPro"/>
</dbReference>
<dbReference type="CDD" id="cd01803">
    <property type="entry name" value="Ubl_ubiquitin"/>
    <property type="match status" value="1"/>
</dbReference>
<dbReference type="FunFam" id="3.10.20.90:FF:000008">
    <property type="entry name" value="Ubiquitin-40S ribosomal protein S27a"/>
    <property type="match status" value="1"/>
</dbReference>
<dbReference type="Gene3D" id="6.20.50.150">
    <property type="match status" value="1"/>
</dbReference>
<dbReference type="Gene3D" id="3.10.20.90">
    <property type="entry name" value="Phosphatidylinositol 3-kinase Catalytic Subunit, Chain A, domain 1"/>
    <property type="match status" value="1"/>
</dbReference>
<dbReference type="InterPro" id="IPR002906">
    <property type="entry name" value="Ribosomal_eS31"/>
</dbReference>
<dbReference type="InterPro" id="IPR038582">
    <property type="entry name" value="Ribosomal_eS31_euk-type_sf"/>
</dbReference>
<dbReference type="InterPro" id="IPR011332">
    <property type="entry name" value="Ribosomal_zn-bd"/>
</dbReference>
<dbReference type="InterPro" id="IPR000626">
    <property type="entry name" value="Ubiquitin-like_dom"/>
</dbReference>
<dbReference type="InterPro" id="IPR029071">
    <property type="entry name" value="Ubiquitin-like_domsf"/>
</dbReference>
<dbReference type="InterPro" id="IPR019954">
    <property type="entry name" value="Ubiquitin_CS"/>
</dbReference>
<dbReference type="InterPro" id="IPR019956">
    <property type="entry name" value="Ubiquitin_dom"/>
</dbReference>
<dbReference type="InterPro" id="IPR050158">
    <property type="entry name" value="Ubiquitin_ubiquitin-like"/>
</dbReference>
<dbReference type="NCBIfam" id="NF001669">
    <property type="entry name" value="PRK00432.1"/>
    <property type="match status" value="1"/>
</dbReference>
<dbReference type="PANTHER" id="PTHR10666">
    <property type="entry name" value="UBIQUITIN"/>
    <property type="match status" value="1"/>
</dbReference>
<dbReference type="Pfam" id="PF01599">
    <property type="entry name" value="Ribosomal_S27"/>
    <property type="match status" value="1"/>
</dbReference>
<dbReference type="Pfam" id="PF00240">
    <property type="entry name" value="ubiquitin"/>
    <property type="match status" value="1"/>
</dbReference>
<dbReference type="PRINTS" id="PR00348">
    <property type="entry name" value="UBIQUITIN"/>
</dbReference>
<dbReference type="SMART" id="SM01402">
    <property type="entry name" value="Ribosomal_S27"/>
    <property type="match status" value="1"/>
</dbReference>
<dbReference type="SMART" id="SM00213">
    <property type="entry name" value="UBQ"/>
    <property type="match status" value="1"/>
</dbReference>
<dbReference type="SUPFAM" id="SSF54236">
    <property type="entry name" value="Ubiquitin-like"/>
    <property type="match status" value="1"/>
</dbReference>
<dbReference type="SUPFAM" id="SSF57829">
    <property type="entry name" value="Zn-binding ribosomal proteins"/>
    <property type="match status" value="1"/>
</dbReference>
<dbReference type="PROSITE" id="PS00299">
    <property type="entry name" value="UBIQUITIN_1"/>
    <property type="match status" value="1"/>
</dbReference>
<dbReference type="PROSITE" id="PS50053">
    <property type="entry name" value="UBIQUITIN_2"/>
    <property type="match status" value="1"/>
</dbReference>
<name>RS27A_KLULA</name>
<feature type="chain" id="PRO_0000114857" description="Ubiquitin">
    <location>
        <begin position="1"/>
        <end position="76"/>
    </location>
</feature>
<feature type="chain" id="PRO_0000137685" description="Small ribosomal subunit protein eS31">
    <location>
        <begin position="77"/>
        <end position="150"/>
    </location>
</feature>
<feature type="domain" description="Ubiquitin-like" evidence="2">
    <location>
        <begin position="1"/>
        <end position="76"/>
    </location>
</feature>
<feature type="zinc finger region" description="C4-type">
    <location>
        <begin position="121"/>
        <end position="142"/>
    </location>
</feature>
<feature type="cross-link" description="Glycyl lysine isopeptide (Lys-Gly) (interchain with G-Cter in ubiquitin)">
    <location>
        <position position="6"/>
    </location>
</feature>
<feature type="cross-link" description="Glycyl lysine isopeptide (Lys-Gly) (interchain with G-Cter in ubiquitin)">
    <location>
        <position position="11"/>
    </location>
</feature>
<feature type="cross-link" description="Glycyl lysine isopeptide (Lys-Gly) (interchain with G-Cter in ubiquitin)">
    <location>
        <position position="27"/>
    </location>
</feature>
<feature type="cross-link" description="Glycyl lysine isopeptide (Lys-Gly) (interchain with G-Cter in ubiquitin)">
    <location>
        <position position="29"/>
    </location>
</feature>
<feature type="cross-link" description="Glycyl lysine isopeptide (Lys-Gly) (interchain with G-Cter in ubiquitin)">
    <location>
        <position position="33"/>
    </location>
</feature>
<feature type="cross-link" description="Glycyl lysine isopeptide (Lys-Gly) (interchain with G-Cter in ubiquitin)" evidence="1">
    <location>
        <position position="48"/>
    </location>
</feature>
<feature type="cross-link" description="Glycyl lysine isopeptide (Lys-Gly) (interchain with G-Cter in ubiquitin)">
    <location>
        <position position="63"/>
    </location>
</feature>
<feature type="cross-link" description="Glycyl lysine isopeptide (Gly-Lys) (interchain with K-? in acceptor proteins)" evidence="2">
    <location>
        <position position="76"/>
    </location>
</feature>
<feature type="turn" evidence="4">
    <location>
        <begin position="99"/>
        <end position="102"/>
    </location>
</feature>
<feature type="helix" evidence="4">
    <location>
        <begin position="103"/>
        <end position="105"/>
    </location>
</feature>
<feature type="strand" evidence="4">
    <location>
        <begin position="106"/>
        <end position="108"/>
    </location>
</feature>
<feature type="strand" evidence="4">
    <location>
        <begin position="110"/>
        <end position="112"/>
    </location>
</feature>
<feature type="strand" evidence="4">
    <location>
        <begin position="114"/>
        <end position="118"/>
    </location>
</feature>
<feature type="turn" evidence="4">
    <location>
        <begin position="122"/>
        <end position="124"/>
    </location>
</feature>
<feature type="strand" evidence="4">
    <location>
        <begin position="131"/>
        <end position="138"/>
    </location>
</feature>
<feature type="strand" evidence="4">
    <location>
        <begin position="140"/>
        <end position="142"/>
    </location>
</feature>
<feature type="turn" evidence="4">
    <location>
        <begin position="143"/>
        <end position="145"/>
    </location>
</feature>
<feature type="strand" evidence="5">
    <location>
        <begin position="147"/>
        <end position="149"/>
    </location>
</feature>
<organism>
    <name type="scientific">Kluyveromyces lactis (strain ATCC 8585 / CBS 2359 / DSM 70799 / NBRC 1267 / NRRL Y-1140 / WM37)</name>
    <name type="common">Yeast</name>
    <name type="synonym">Candida sphaerica</name>
    <dbReference type="NCBI Taxonomy" id="284590"/>
    <lineage>
        <taxon>Eukaryota</taxon>
        <taxon>Fungi</taxon>
        <taxon>Dikarya</taxon>
        <taxon>Ascomycota</taxon>
        <taxon>Saccharomycotina</taxon>
        <taxon>Saccharomycetes</taxon>
        <taxon>Saccharomycetales</taxon>
        <taxon>Saccharomycetaceae</taxon>
        <taxon>Kluyveromyces</taxon>
    </lineage>
</organism>
<proteinExistence type="evidence at protein level"/>
<accession>P69061</accession>
<accession>Q6CQ09</accession>
<accession>Q6CQB8</accession>
<accession>Q9Y848</accession>
<accession>Q9Y852</accession>
<reference key="1">
    <citation type="journal article" date="2000" name="Yeast">
        <title>The ubiquitin-encoding genes of Kluyveromyces lactis.</title>
        <authorList>
            <person name="Bao W.-G."/>
            <person name="Fukuhara H."/>
        </authorList>
    </citation>
    <scope>NUCLEOTIDE SEQUENCE [GENOMIC DNA]</scope>
    <source>
        <strain>ATCCC 76492 / CBS 2359/152 / CLIB 210</strain>
    </source>
</reference>
<reference key="2">
    <citation type="journal article" date="2004" name="Nature">
        <title>Genome evolution in yeasts.</title>
        <authorList>
            <person name="Dujon B."/>
            <person name="Sherman D."/>
            <person name="Fischer G."/>
            <person name="Durrens P."/>
            <person name="Casaregola S."/>
            <person name="Lafontaine I."/>
            <person name="de Montigny J."/>
            <person name="Marck C."/>
            <person name="Neuveglise C."/>
            <person name="Talla E."/>
            <person name="Goffard N."/>
            <person name="Frangeul L."/>
            <person name="Aigle M."/>
            <person name="Anthouard V."/>
            <person name="Babour A."/>
            <person name="Barbe V."/>
            <person name="Barnay S."/>
            <person name="Blanchin S."/>
            <person name="Beckerich J.-M."/>
            <person name="Beyne E."/>
            <person name="Bleykasten C."/>
            <person name="Boisrame A."/>
            <person name="Boyer J."/>
            <person name="Cattolico L."/>
            <person name="Confanioleri F."/>
            <person name="de Daruvar A."/>
            <person name="Despons L."/>
            <person name="Fabre E."/>
            <person name="Fairhead C."/>
            <person name="Ferry-Dumazet H."/>
            <person name="Groppi A."/>
            <person name="Hantraye F."/>
            <person name="Hennequin C."/>
            <person name="Jauniaux N."/>
            <person name="Joyet P."/>
            <person name="Kachouri R."/>
            <person name="Kerrest A."/>
            <person name="Koszul R."/>
            <person name="Lemaire M."/>
            <person name="Lesur I."/>
            <person name="Ma L."/>
            <person name="Muller H."/>
            <person name="Nicaud J.-M."/>
            <person name="Nikolski M."/>
            <person name="Oztas S."/>
            <person name="Ozier-Kalogeropoulos O."/>
            <person name="Pellenz S."/>
            <person name="Potier S."/>
            <person name="Richard G.-F."/>
            <person name="Straub M.-L."/>
            <person name="Suleau A."/>
            <person name="Swennen D."/>
            <person name="Tekaia F."/>
            <person name="Wesolowski-Louvel M."/>
            <person name="Westhof E."/>
            <person name="Wirth B."/>
            <person name="Zeniou-Meyer M."/>
            <person name="Zivanovic Y."/>
            <person name="Bolotin-Fukuhara M."/>
            <person name="Thierry A."/>
            <person name="Bouchier C."/>
            <person name="Caudron B."/>
            <person name="Scarpelli C."/>
            <person name="Gaillardin C."/>
            <person name="Weissenbach J."/>
            <person name="Wincker P."/>
            <person name="Souciet J.-L."/>
        </authorList>
    </citation>
    <scope>NUCLEOTIDE SEQUENCE [LARGE SCALE GENOMIC DNA]</scope>
    <source>
        <strain>ATCC 8585 / CBS 2359 / DSM 70799 / NBRC 1267 / NRRL Y-1140 / WM37</strain>
    </source>
</reference>
<gene>
    <name type="primary">ubi3</name>
    <name type="ordered locus">KLLA0D18304g</name>
</gene>
<evidence type="ECO:0000250" key="1"/>
<evidence type="ECO:0000255" key="2">
    <source>
        <dbReference type="PROSITE-ProRule" id="PRU00214"/>
    </source>
</evidence>
<evidence type="ECO:0000305" key="3"/>
<evidence type="ECO:0007829" key="4">
    <source>
        <dbReference type="PDB" id="8RW1"/>
    </source>
</evidence>
<evidence type="ECO:0007829" key="5">
    <source>
        <dbReference type="PDB" id="8S8D"/>
    </source>
</evidence>